<gene>
    <name evidence="1" type="primary">ruvA</name>
    <name type="ordered locus">Bpet0904</name>
</gene>
<name>RUVA_BORPD</name>
<organism>
    <name type="scientific">Bordetella petrii (strain ATCC BAA-461 / DSM 12804 / CCUG 43448)</name>
    <dbReference type="NCBI Taxonomy" id="340100"/>
    <lineage>
        <taxon>Bacteria</taxon>
        <taxon>Pseudomonadati</taxon>
        <taxon>Pseudomonadota</taxon>
        <taxon>Betaproteobacteria</taxon>
        <taxon>Burkholderiales</taxon>
        <taxon>Alcaligenaceae</taxon>
        <taxon>Bordetella</taxon>
    </lineage>
</organism>
<protein>
    <recommendedName>
        <fullName evidence="1">Holliday junction branch migration complex subunit RuvA</fullName>
    </recommendedName>
</protein>
<sequence length="190" mass="20050">MIGRITGTLIEKLPPTICVDVNGLGYDIEVPMSTLYALPELGARVTLHTHLTVREDAHILYGFATAAERGAFRELIKVSGIGARTALSVLSGLSVSDLAQAITLQESGRLTRVPGIGKKTAERLLLEMRGKLGADIGATAHAVPDSQTDILNALLALGYSDKESQAALKKLPEGTGVSEGIRLALKALVR</sequence>
<reference key="1">
    <citation type="journal article" date="2008" name="BMC Genomics">
        <title>The missing link: Bordetella petrii is endowed with both the metabolic versatility of environmental bacteria and virulence traits of pathogenic Bordetellae.</title>
        <authorList>
            <person name="Gross R."/>
            <person name="Guzman C.A."/>
            <person name="Sebaihia M."/>
            <person name="Martin dos Santos V.A.P."/>
            <person name="Pieper D.H."/>
            <person name="Koebnik R."/>
            <person name="Lechner M."/>
            <person name="Bartels D."/>
            <person name="Buhrmester J."/>
            <person name="Choudhuri J.V."/>
            <person name="Ebensen T."/>
            <person name="Gaigalat L."/>
            <person name="Herrmann S."/>
            <person name="Khachane A.N."/>
            <person name="Larisch C."/>
            <person name="Link S."/>
            <person name="Linke B."/>
            <person name="Meyer F."/>
            <person name="Mormann S."/>
            <person name="Nakunst D."/>
            <person name="Rueckert C."/>
            <person name="Schneiker-Bekel S."/>
            <person name="Schulze K."/>
            <person name="Voerholter F.-J."/>
            <person name="Yevsa T."/>
            <person name="Engle J.T."/>
            <person name="Goldman W.E."/>
            <person name="Puehler A."/>
            <person name="Goebel U.B."/>
            <person name="Goesmann A."/>
            <person name="Bloecker H."/>
            <person name="Kaiser O."/>
            <person name="Martinez-Arias R."/>
        </authorList>
    </citation>
    <scope>NUCLEOTIDE SEQUENCE [LARGE SCALE GENOMIC DNA]</scope>
    <source>
        <strain>ATCC BAA-461 / DSM 12804 / CCUG 43448</strain>
    </source>
</reference>
<evidence type="ECO:0000255" key="1">
    <source>
        <dbReference type="HAMAP-Rule" id="MF_00031"/>
    </source>
</evidence>
<proteinExistence type="inferred from homology"/>
<dbReference type="EMBL" id="AM902716">
    <property type="protein sequence ID" value="CAP41236.1"/>
    <property type="molecule type" value="Genomic_DNA"/>
</dbReference>
<dbReference type="SMR" id="A9I8F2"/>
<dbReference type="STRING" id="94624.Bpet0904"/>
<dbReference type="KEGG" id="bpt:Bpet0904"/>
<dbReference type="eggNOG" id="COG0632">
    <property type="taxonomic scope" value="Bacteria"/>
</dbReference>
<dbReference type="Proteomes" id="UP000001225">
    <property type="component" value="Chromosome"/>
</dbReference>
<dbReference type="GO" id="GO:0005737">
    <property type="term" value="C:cytoplasm"/>
    <property type="evidence" value="ECO:0007669"/>
    <property type="project" value="UniProtKB-SubCell"/>
</dbReference>
<dbReference type="GO" id="GO:0009379">
    <property type="term" value="C:Holliday junction helicase complex"/>
    <property type="evidence" value="ECO:0007669"/>
    <property type="project" value="InterPro"/>
</dbReference>
<dbReference type="GO" id="GO:0048476">
    <property type="term" value="C:Holliday junction resolvase complex"/>
    <property type="evidence" value="ECO:0007669"/>
    <property type="project" value="UniProtKB-UniRule"/>
</dbReference>
<dbReference type="GO" id="GO:0005524">
    <property type="term" value="F:ATP binding"/>
    <property type="evidence" value="ECO:0007669"/>
    <property type="project" value="InterPro"/>
</dbReference>
<dbReference type="GO" id="GO:0000400">
    <property type="term" value="F:four-way junction DNA binding"/>
    <property type="evidence" value="ECO:0007669"/>
    <property type="project" value="UniProtKB-UniRule"/>
</dbReference>
<dbReference type="GO" id="GO:0009378">
    <property type="term" value="F:four-way junction helicase activity"/>
    <property type="evidence" value="ECO:0007669"/>
    <property type="project" value="InterPro"/>
</dbReference>
<dbReference type="GO" id="GO:0006310">
    <property type="term" value="P:DNA recombination"/>
    <property type="evidence" value="ECO:0007669"/>
    <property type="project" value="UniProtKB-UniRule"/>
</dbReference>
<dbReference type="GO" id="GO:0006281">
    <property type="term" value="P:DNA repair"/>
    <property type="evidence" value="ECO:0007669"/>
    <property type="project" value="UniProtKB-UniRule"/>
</dbReference>
<dbReference type="CDD" id="cd14332">
    <property type="entry name" value="UBA_RuvA_C"/>
    <property type="match status" value="1"/>
</dbReference>
<dbReference type="Gene3D" id="1.10.150.20">
    <property type="entry name" value="5' to 3' exonuclease, C-terminal subdomain"/>
    <property type="match status" value="1"/>
</dbReference>
<dbReference type="Gene3D" id="1.10.8.10">
    <property type="entry name" value="DNA helicase RuvA subunit, C-terminal domain"/>
    <property type="match status" value="1"/>
</dbReference>
<dbReference type="Gene3D" id="2.40.50.140">
    <property type="entry name" value="Nucleic acid-binding proteins"/>
    <property type="match status" value="1"/>
</dbReference>
<dbReference type="HAMAP" id="MF_00031">
    <property type="entry name" value="DNA_HJ_migration_RuvA"/>
    <property type="match status" value="1"/>
</dbReference>
<dbReference type="InterPro" id="IPR013849">
    <property type="entry name" value="DNA_helicase_Holl-junc_RuvA_I"/>
</dbReference>
<dbReference type="InterPro" id="IPR003583">
    <property type="entry name" value="Hlx-hairpin-Hlx_DNA-bd_motif"/>
</dbReference>
<dbReference type="InterPro" id="IPR012340">
    <property type="entry name" value="NA-bd_OB-fold"/>
</dbReference>
<dbReference type="InterPro" id="IPR000085">
    <property type="entry name" value="RuvA"/>
</dbReference>
<dbReference type="InterPro" id="IPR010994">
    <property type="entry name" value="RuvA_2-like"/>
</dbReference>
<dbReference type="InterPro" id="IPR011114">
    <property type="entry name" value="RuvA_C"/>
</dbReference>
<dbReference type="InterPro" id="IPR036267">
    <property type="entry name" value="RuvA_C_sf"/>
</dbReference>
<dbReference type="NCBIfam" id="TIGR00084">
    <property type="entry name" value="ruvA"/>
    <property type="match status" value="1"/>
</dbReference>
<dbReference type="Pfam" id="PF14520">
    <property type="entry name" value="HHH_5"/>
    <property type="match status" value="1"/>
</dbReference>
<dbReference type="Pfam" id="PF07499">
    <property type="entry name" value="RuvA_C"/>
    <property type="match status" value="1"/>
</dbReference>
<dbReference type="Pfam" id="PF01330">
    <property type="entry name" value="RuvA_N"/>
    <property type="match status" value="1"/>
</dbReference>
<dbReference type="SMART" id="SM00278">
    <property type="entry name" value="HhH1"/>
    <property type="match status" value="2"/>
</dbReference>
<dbReference type="SUPFAM" id="SSF46929">
    <property type="entry name" value="DNA helicase RuvA subunit, C-terminal domain"/>
    <property type="match status" value="1"/>
</dbReference>
<dbReference type="SUPFAM" id="SSF50249">
    <property type="entry name" value="Nucleic acid-binding proteins"/>
    <property type="match status" value="1"/>
</dbReference>
<dbReference type="SUPFAM" id="SSF47781">
    <property type="entry name" value="RuvA domain 2-like"/>
    <property type="match status" value="1"/>
</dbReference>
<keyword id="KW-0963">Cytoplasm</keyword>
<keyword id="KW-0227">DNA damage</keyword>
<keyword id="KW-0233">DNA recombination</keyword>
<keyword id="KW-0234">DNA repair</keyword>
<keyword id="KW-0238">DNA-binding</keyword>
<accession>A9I8F2</accession>
<feature type="chain" id="PRO_1000090286" description="Holliday junction branch migration complex subunit RuvA">
    <location>
        <begin position="1"/>
        <end position="190"/>
    </location>
</feature>
<feature type="region of interest" description="Domain I" evidence="1">
    <location>
        <begin position="1"/>
        <end position="64"/>
    </location>
</feature>
<feature type="region of interest" description="Domain II" evidence="1">
    <location>
        <begin position="65"/>
        <end position="137"/>
    </location>
</feature>
<feature type="region of interest" description="Flexible linker" evidence="1">
    <location>
        <begin position="137"/>
        <end position="141"/>
    </location>
</feature>
<feature type="region of interest" description="Domain III" evidence="1">
    <location>
        <begin position="142"/>
        <end position="190"/>
    </location>
</feature>
<comment type="function">
    <text evidence="1">The RuvA-RuvB-RuvC complex processes Holliday junction (HJ) DNA during genetic recombination and DNA repair, while the RuvA-RuvB complex plays an important role in the rescue of blocked DNA replication forks via replication fork reversal (RFR). RuvA specifically binds to HJ cruciform DNA, conferring on it an open structure. The RuvB hexamer acts as an ATP-dependent pump, pulling dsDNA into and through the RuvAB complex. HJ branch migration allows RuvC to scan DNA until it finds its consensus sequence, where it cleaves and resolves the cruciform DNA.</text>
</comment>
<comment type="subunit">
    <text evidence="1">Homotetramer. Forms an RuvA(8)-RuvB(12)-Holliday junction (HJ) complex. HJ DNA is sandwiched between 2 RuvA tetramers; dsDNA enters through RuvA and exits via RuvB. An RuvB hexamer assembles on each DNA strand where it exits the tetramer. Each RuvB hexamer is contacted by two RuvA subunits (via domain III) on 2 adjacent RuvB subunits; this complex drives branch migration. In the full resolvosome a probable DNA-RuvA(4)-RuvB(12)-RuvC(2) complex forms which resolves the HJ.</text>
</comment>
<comment type="subcellular location">
    <subcellularLocation>
        <location evidence="1">Cytoplasm</location>
    </subcellularLocation>
</comment>
<comment type="domain">
    <text evidence="1">Has three domains with a flexible linker between the domains II and III and assumes an 'L' shape. Domain III is highly mobile and contacts RuvB.</text>
</comment>
<comment type="similarity">
    <text evidence="1">Belongs to the RuvA family.</text>
</comment>